<proteinExistence type="inferred from homology"/>
<comment type="function">
    <text evidence="1">DNA-dependent RNA polymerase catalyzes the transcription of DNA into RNA using the four ribonucleoside triphosphates as substrates.</text>
</comment>
<comment type="catalytic activity">
    <reaction evidence="1">
        <text>RNA(n) + a ribonucleoside 5'-triphosphate = RNA(n+1) + diphosphate</text>
        <dbReference type="Rhea" id="RHEA:21248"/>
        <dbReference type="Rhea" id="RHEA-COMP:14527"/>
        <dbReference type="Rhea" id="RHEA-COMP:17342"/>
        <dbReference type="ChEBI" id="CHEBI:33019"/>
        <dbReference type="ChEBI" id="CHEBI:61557"/>
        <dbReference type="ChEBI" id="CHEBI:140395"/>
        <dbReference type="EC" id="2.7.7.6"/>
    </reaction>
</comment>
<comment type="subunit">
    <text evidence="1">The RNAP catalytic core consists of 2 alpha, 1 beta, 1 beta' and 1 omega subunit. When a sigma factor is associated with the core the holoenzyme is formed, which can initiate transcription.</text>
</comment>
<comment type="similarity">
    <text evidence="1">Belongs to the RNA polymerase beta chain family.</text>
</comment>
<gene>
    <name evidence="1" type="primary">rpoB</name>
    <name type="ordered locus">CJA_0692</name>
</gene>
<name>RPOB_CELJU</name>
<evidence type="ECO:0000255" key="1">
    <source>
        <dbReference type="HAMAP-Rule" id="MF_01321"/>
    </source>
</evidence>
<dbReference type="EC" id="2.7.7.6" evidence="1"/>
<dbReference type="EMBL" id="CP000934">
    <property type="protein sequence ID" value="ACE84618.1"/>
    <property type="molecule type" value="Genomic_DNA"/>
</dbReference>
<dbReference type="RefSeq" id="WP_012486357.1">
    <property type="nucleotide sequence ID" value="NC_010995.1"/>
</dbReference>
<dbReference type="SMR" id="B3PK30"/>
<dbReference type="STRING" id="498211.CJA_0692"/>
<dbReference type="KEGG" id="cja:CJA_0692"/>
<dbReference type="eggNOG" id="COG0085">
    <property type="taxonomic scope" value="Bacteria"/>
</dbReference>
<dbReference type="HOGENOM" id="CLU_000524_4_3_6"/>
<dbReference type="OrthoDB" id="9803954at2"/>
<dbReference type="Proteomes" id="UP000001036">
    <property type="component" value="Chromosome"/>
</dbReference>
<dbReference type="GO" id="GO:0000428">
    <property type="term" value="C:DNA-directed RNA polymerase complex"/>
    <property type="evidence" value="ECO:0007669"/>
    <property type="project" value="UniProtKB-KW"/>
</dbReference>
<dbReference type="GO" id="GO:0003677">
    <property type="term" value="F:DNA binding"/>
    <property type="evidence" value="ECO:0007669"/>
    <property type="project" value="UniProtKB-UniRule"/>
</dbReference>
<dbReference type="GO" id="GO:0003899">
    <property type="term" value="F:DNA-directed RNA polymerase activity"/>
    <property type="evidence" value="ECO:0007669"/>
    <property type="project" value="UniProtKB-UniRule"/>
</dbReference>
<dbReference type="GO" id="GO:0032549">
    <property type="term" value="F:ribonucleoside binding"/>
    <property type="evidence" value="ECO:0007669"/>
    <property type="project" value="InterPro"/>
</dbReference>
<dbReference type="GO" id="GO:0006351">
    <property type="term" value="P:DNA-templated transcription"/>
    <property type="evidence" value="ECO:0007669"/>
    <property type="project" value="UniProtKB-UniRule"/>
</dbReference>
<dbReference type="CDD" id="cd00653">
    <property type="entry name" value="RNA_pol_B_RPB2"/>
    <property type="match status" value="1"/>
</dbReference>
<dbReference type="FunFam" id="2.40.270.10:FF:000003">
    <property type="entry name" value="DNA-directed RNA polymerase subunit beta"/>
    <property type="match status" value="1"/>
</dbReference>
<dbReference type="FunFam" id="2.40.50.100:FF:000006">
    <property type="entry name" value="DNA-directed RNA polymerase subunit beta"/>
    <property type="match status" value="1"/>
</dbReference>
<dbReference type="FunFam" id="2.40.50.150:FF:000001">
    <property type="entry name" value="DNA-directed RNA polymerase subunit beta"/>
    <property type="match status" value="1"/>
</dbReference>
<dbReference type="FunFam" id="3.90.1110.10:FF:000001">
    <property type="entry name" value="DNA-directed RNA polymerase subunit beta"/>
    <property type="match status" value="1"/>
</dbReference>
<dbReference type="FunFam" id="3.90.1110.10:FF:000004">
    <property type="entry name" value="DNA-directed RNA polymerase subunit beta"/>
    <property type="match status" value="1"/>
</dbReference>
<dbReference type="FunFam" id="3.90.1800.10:FF:000001">
    <property type="entry name" value="DNA-directed RNA polymerase subunit beta"/>
    <property type="match status" value="1"/>
</dbReference>
<dbReference type="Gene3D" id="2.40.50.100">
    <property type="match status" value="1"/>
</dbReference>
<dbReference type="Gene3D" id="2.40.50.150">
    <property type="match status" value="1"/>
</dbReference>
<dbReference type="Gene3D" id="3.90.1100.10">
    <property type="match status" value="2"/>
</dbReference>
<dbReference type="Gene3D" id="6.10.140.1670">
    <property type="match status" value="1"/>
</dbReference>
<dbReference type="Gene3D" id="2.30.150.10">
    <property type="entry name" value="DNA-directed RNA polymerase, beta subunit, external 1 domain"/>
    <property type="match status" value="1"/>
</dbReference>
<dbReference type="Gene3D" id="2.40.270.10">
    <property type="entry name" value="DNA-directed RNA polymerase, subunit 2, domain 6"/>
    <property type="match status" value="1"/>
</dbReference>
<dbReference type="Gene3D" id="3.90.1800.10">
    <property type="entry name" value="RNA polymerase alpha subunit dimerisation domain"/>
    <property type="match status" value="1"/>
</dbReference>
<dbReference type="Gene3D" id="3.90.1110.10">
    <property type="entry name" value="RNA polymerase Rpb2, domain 2"/>
    <property type="match status" value="1"/>
</dbReference>
<dbReference type="HAMAP" id="MF_01321">
    <property type="entry name" value="RNApol_bact_RpoB"/>
    <property type="match status" value="1"/>
</dbReference>
<dbReference type="InterPro" id="IPR042107">
    <property type="entry name" value="DNA-dir_RNA_pol_bsu_ext_1_sf"/>
</dbReference>
<dbReference type="InterPro" id="IPR019462">
    <property type="entry name" value="DNA-dir_RNA_pol_bsu_external_1"/>
</dbReference>
<dbReference type="InterPro" id="IPR015712">
    <property type="entry name" value="DNA-dir_RNA_pol_su2"/>
</dbReference>
<dbReference type="InterPro" id="IPR007120">
    <property type="entry name" value="DNA-dir_RNAP_su2_dom"/>
</dbReference>
<dbReference type="InterPro" id="IPR037033">
    <property type="entry name" value="DNA-dir_RNAP_su2_hyb_sf"/>
</dbReference>
<dbReference type="InterPro" id="IPR010243">
    <property type="entry name" value="RNA_pol_bsu_bac"/>
</dbReference>
<dbReference type="InterPro" id="IPR007121">
    <property type="entry name" value="RNA_pol_bsu_CS"/>
</dbReference>
<dbReference type="InterPro" id="IPR007644">
    <property type="entry name" value="RNA_pol_bsu_protrusion"/>
</dbReference>
<dbReference type="InterPro" id="IPR007642">
    <property type="entry name" value="RNA_pol_Rpb2_2"/>
</dbReference>
<dbReference type="InterPro" id="IPR037034">
    <property type="entry name" value="RNA_pol_Rpb2_2_sf"/>
</dbReference>
<dbReference type="InterPro" id="IPR007645">
    <property type="entry name" value="RNA_pol_Rpb2_3"/>
</dbReference>
<dbReference type="InterPro" id="IPR007641">
    <property type="entry name" value="RNA_pol_Rpb2_7"/>
</dbReference>
<dbReference type="InterPro" id="IPR014724">
    <property type="entry name" value="RNA_pol_RPB2_OB-fold"/>
</dbReference>
<dbReference type="NCBIfam" id="NF001616">
    <property type="entry name" value="PRK00405.1"/>
    <property type="match status" value="1"/>
</dbReference>
<dbReference type="NCBIfam" id="TIGR02013">
    <property type="entry name" value="rpoB"/>
    <property type="match status" value="1"/>
</dbReference>
<dbReference type="PANTHER" id="PTHR20856">
    <property type="entry name" value="DNA-DIRECTED RNA POLYMERASE I SUBUNIT 2"/>
    <property type="match status" value="1"/>
</dbReference>
<dbReference type="Pfam" id="PF04563">
    <property type="entry name" value="RNA_pol_Rpb2_1"/>
    <property type="match status" value="1"/>
</dbReference>
<dbReference type="Pfam" id="PF04561">
    <property type="entry name" value="RNA_pol_Rpb2_2"/>
    <property type="match status" value="2"/>
</dbReference>
<dbReference type="Pfam" id="PF04565">
    <property type="entry name" value="RNA_pol_Rpb2_3"/>
    <property type="match status" value="1"/>
</dbReference>
<dbReference type="Pfam" id="PF10385">
    <property type="entry name" value="RNA_pol_Rpb2_45"/>
    <property type="match status" value="1"/>
</dbReference>
<dbReference type="Pfam" id="PF00562">
    <property type="entry name" value="RNA_pol_Rpb2_6"/>
    <property type="match status" value="1"/>
</dbReference>
<dbReference type="Pfam" id="PF04560">
    <property type="entry name" value="RNA_pol_Rpb2_7"/>
    <property type="match status" value="1"/>
</dbReference>
<dbReference type="SUPFAM" id="SSF64484">
    <property type="entry name" value="beta and beta-prime subunits of DNA dependent RNA-polymerase"/>
    <property type="match status" value="1"/>
</dbReference>
<dbReference type="PROSITE" id="PS01166">
    <property type="entry name" value="RNA_POL_BETA"/>
    <property type="match status" value="1"/>
</dbReference>
<keyword id="KW-0240">DNA-directed RNA polymerase</keyword>
<keyword id="KW-0548">Nucleotidyltransferase</keyword>
<keyword id="KW-1185">Reference proteome</keyword>
<keyword id="KW-0804">Transcription</keyword>
<keyword id="KW-0808">Transferase</keyword>
<protein>
    <recommendedName>
        <fullName evidence="1">DNA-directed RNA polymerase subunit beta</fullName>
        <shortName evidence="1">RNAP subunit beta</shortName>
        <ecNumber evidence="1">2.7.7.6</ecNumber>
    </recommendedName>
    <alternativeName>
        <fullName evidence="1">RNA polymerase subunit beta</fullName>
    </alternativeName>
    <alternativeName>
        <fullName evidence="1">Transcriptase subunit beta</fullName>
    </alternativeName>
</protein>
<reference key="1">
    <citation type="journal article" date="2008" name="J. Bacteriol.">
        <title>Insights into plant cell wall degradation from the genome sequence of the soil bacterium Cellvibrio japonicus.</title>
        <authorList>
            <person name="DeBoy R.T."/>
            <person name="Mongodin E.F."/>
            <person name="Fouts D.E."/>
            <person name="Tailford L.E."/>
            <person name="Khouri H."/>
            <person name="Emerson J.B."/>
            <person name="Mohamoud Y."/>
            <person name="Watkins K."/>
            <person name="Henrissat B."/>
            <person name="Gilbert H.J."/>
            <person name="Nelson K.E."/>
        </authorList>
    </citation>
    <scope>NUCLEOTIDE SEQUENCE [LARGE SCALE GENOMIC DNA]</scope>
    <source>
        <strain>Ueda107</strain>
    </source>
</reference>
<sequence length="1361" mass="151555">MAYSYTEKKRIRKNFGKLPHVMDVPYLLAIQLDSYRKFTQADLSANKREDVGLHAAFRSVFPIVSYSGNAALEYVSYSLGKAAFDVNECILRGVTYAVPLRVKVRLIIYDRESANKAIKDIKEQEVYMGEIPLMTDNGTFVINGTERVIVSQLHRSPGVFFDHDKGKTHSSGKLLYSARIIPYRGSWLDFEFDPKDLLYVRIDRRRKLPATILLRALNYSSQEMLSMFFETSSFTLGKDGQFSYEVVPSRLRGDVATFDIKDDKGNIIVEEGRRITARHIRQLEKAGVDQMEVPSEYLLGRSLAKDIVDTRTGELLFECNTEITSDVLSKIVAAGVEKVETLYTNELDCGPFISETLRIDPTRTQLEALVEIYRMMRPGEPPTKESAEALFQNLFFSQERYDLSAVGRMKFNRRLGRETETGEGTLSNDDIVDVMKTLISIRNGKGVVDDIDHLGNRRVRSVGEMAENQFRVGLVRVERAVKERLSMAESEGLMPQDLINAKPVAAAVKEFFGSSQLSQFMDQNNPLSEITHKRRVFALGPGGLTRERAGFEVRDVHPTHYGRVCPIETPEGPNIGLINSLATYARTNNYGFLESPYRKVIEGKVTDQIEYLSAINESEYVIAQASASLDDNGRLTEELVSVRHQNEFTLKAPTDVQYMDVSARQVVSVAASLIPFLEHDDANRALMGSNMQRQAVPTLRSQKPLVGTGMERNVAADSGVCVVAKRGGVIDSVDAGRIVVKVHDAEVEAGDAGVDIYNLIKYTRSNQNTCINQRPIVSMGDIVSRGDILADGPSVDMGELALGQNMRIAFMPWNGYNFEDSILVSERVVQEDRFTTIHIQELTCIARDTKLGSEEITADIPNVGESALSKLDESGIVYIGAEVGGGDILVGKVTPKGETQLTPEEKLLRAIFGEKASDVKDTSLRVPSGTKGTVIDVQVFTRDGLEKDQRSLEIEKAQLDEVRKDLNEEFRIVETATFERLRAALVGQIVASGKGVKKGEALTHDILDGLEKDQWFKLRMNEDALNEQIDRAEEQLAERRKILDERFEDKKRKLSTGDDLAPGVLKIVKVYLAIKRRIQPGDKMAGRHGNKGVISVIMPVEDMPYDENGETVDIVLNPLGVPSRMNVGQVLEMHLGMAAKGLGVKINKLIQEQKAVADIRSFLEEIYNSTGDVAAKEDLVSFSDREVIDLAKNLVDGVPMATPVFDGAKEHEIKALLRLASLSDTGQTTLFDGRTGDQFSRSVTVGYMYMLKLNHLVDDKMHARSTGSYSLVTQQPLGGKAQFGGQRFGEMEVWALEAYGAAYTLQEMLTVKSDDVAGRTKMYKNIVDGDHRMEPGMPESFNVLVKEIRSLGINIELEQED</sequence>
<accession>B3PK30</accession>
<organism>
    <name type="scientific">Cellvibrio japonicus (strain Ueda107)</name>
    <name type="common">Pseudomonas fluorescens subsp. cellulosa</name>
    <dbReference type="NCBI Taxonomy" id="498211"/>
    <lineage>
        <taxon>Bacteria</taxon>
        <taxon>Pseudomonadati</taxon>
        <taxon>Pseudomonadota</taxon>
        <taxon>Gammaproteobacteria</taxon>
        <taxon>Cellvibrionales</taxon>
        <taxon>Cellvibrionaceae</taxon>
        <taxon>Cellvibrio</taxon>
    </lineage>
</organism>
<feature type="chain" id="PRO_1000141674" description="DNA-directed RNA polymerase subunit beta">
    <location>
        <begin position="1"/>
        <end position="1361"/>
    </location>
</feature>